<proteinExistence type="evidence at protein level"/>
<gene>
    <name evidence="13" type="primary">Elf4</name>
    <name evidence="12" type="synonym">Mef</name>
</gene>
<dbReference type="EMBL" id="AF016714">
    <property type="protein sequence ID" value="AAD01601.1"/>
    <property type="molecule type" value="mRNA"/>
</dbReference>
<dbReference type="EMBL" id="AL844594">
    <property type="status" value="NOT_ANNOTATED_CDS"/>
    <property type="molecule type" value="Genomic_DNA"/>
</dbReference>
<dbReference type="CCDS" id="CCDS30108.1"/>
<dbReference type="RefSeq" id="NP_001368805.1">
    <property type="nucleotide sequence ID" value="NM_001381876.1"/>
</dbReference>
<dbReference type="RefSeq" id="NP_062654.2">
    <property type="nucleotide sequence ID" value="NM_019680.2"/>
</dbReference>
<dbReference type="RefSeq" id="XP_006541589.1">
    <property type="nucleotide sequence ID" value="XM_006541526.2"/>
</dbReference>
<dbReference type="RefSeq" id="XP_006541590.1">
    <property type="nucleotide sequence ID" value="XM_006541527.1"/>
</dbReference>
<dbReference type="SMR" id="Q9Z2U4"/>
<dbReference type="BioGRID" id="208021">
    <property type="interactions" value="1"/>
</dbReference>
<dbReference type="FunCoup" id="Q9Z2U4">
    <property type="interactions" value="1723"/>
</dbReference>
<dbReference type="STRING" id="10090.ENSMUSP00000110608"/>
<dbReference type="GlyGen" id="Q9Z2U4">
    <property type="glycosylation" value="1 site"/>
</dbReference>
<dbReference type="iPTMnet" id="Q9Z2U4"/>
<dbReference type="PhosphoSitePlus" id="Q9Z2U4"/>
<dbReference type="jPOST" id="Q9Z2U4"/>
<dbReference type="PaxDb" id="10090-ENSMUSP00000110608"/>
<dbReference type="ProteomicsDB" id="275740"/>
<dbReference type="Antibodypedia" id="16200">
    <property type="antibodies" value="399 antibodies from 30 providers"/>
</dbReference>
<dbReference type="DNASU" id="56501"/>
<dbReference type="Ensembl" id="ENSMUST00000033429.9">
    <property type="protein sequence ID" value="ENSMUSP00000033429.3"/>
    <property type="gene ID" value="ENSMUSG00000031103.13"/>
</dbReference>
<dbReference type="Ensembl" id="ENSMUST00000114958.8">
    <property type="protein sequence ID" value="ENSMUSP00000110608.2"/>
    <property type="gene ID" value="ENSMUSG00000031103.13"/>
</dbReference>
<dbReference type="GeneID" id="56501"/>
<dbReference type="KEGG" id="mmu:56501"/>
<dbReference type="UCSC" id="uc009tce.2">
    <property type="organism name" value="mouse"/>
</dbReference>
<dbReference type="AGR" id="MGI:1928377"/>
<dbReference type="CTD" id="2000"/>
<dbReference type="MGI" id="MGI:1928377">
    <property type="gene designation" value="Elf4"/>
</dbReference>
<dbReference type="VEuPathDB" id="HostDB:ENSMUSG00000031103"/>
<dbReference type="eggNOG" id="KOG3804">
    <property type="taxonomic scope" value="Eukaryota"/>
</dbReference>
<dbReference type="GeneTree" id="ENSGT00940000161870"/>
<dbReference type="HOGENOM" id="CLU_027279_1_0_1"/>
<dbReference type="InParanoid" id="Q9Z2U4"/>
<dbReference type="OMA" id="DDQEGHC"/>
<dbReference type="OrthoDB" id="8196042at2759"/>
<dbReference type="PhylomeDB" id="Q9Z2U4"/>
<dbReference type="TreeFam" id="TF318679"/>
<dbReference type="BioGRID-ORCS" id="56501">
    <property type="hits" value="5 hits in 80 CRISPR screens"/>
</dbReference>
<dbReference type="ChiTaRS" id="Elf4">
    <property type="organism name" value="mouse"/>
</dbReference>
<dbReference type="PRO" id="PR:Q9Z2U4"/>
<dbReference type="Proteomes" id="UP000000589">
    <property type="component" value="Chromosome X"/>
</dbReference>
<dbReference type="RNAct" id="Q9Z2U4">
    <property type="molecule type" value="protein"/>
</dbReference>
<dbReference type="Bgee" id="ENSMUSG00000031103">
    <property type="expression patterns" value="Expressed in granulocyte and 102 other cell types or tissues"/>
</dbReference>
<dbReference type="ExpressionAtlas" id="Q9Z2U4">
    <property type="expression patterns" value="baseline and differential"/>
</dbReference>
<dbReference type="GO" id="GO:0016605">
    <property type="term" value="C:PML body"/>
    <property type="evidence" value="ECO:0000250"/>
    <property type="project" value="UniProtKB"/>
</dbReference>
<dbReference type="GO" id="GO:0001228">
    <property type="term" value="F:DNA-binding transcription activator activity, RNA polymerase II-specific"/>
    <property type="evidence" value="ECO:0007669"/>
    <property type="project" value="Ensembl"/>
</dbReference>
<dbReference type="GO" id="GO:0000978">
    <property type="term" value="F:RNA polymerase II cis-regulatory region sequence-specific DNA binding"/>
    <property type="evidence" value="ECO:0007669"/>
    <property type="project" value="Ensembl"/>
</dbReference>
<dbReference type="GO" id="GO:0001787">
    <property type="term" value="P:natural killer cell proliferation"/>
    <property type="evidence" value="ECO:0000314"/>
    <property type="project" value="UniProtKB"/>
</dbReference>
<dbReference type="GO" id="GO:0050728">
    <property type="term" value="P:negative regulation of inflammatory response"/>
    <property type="evidence" value="ECO:0000315"/>
    <property type="project" value="UniProtKB"/>
</dbReference>
<dbReference type="GO" id="GO:0032691">
    <property type="term" value="P:negative regulation of interleukin-1 beta production"/>
    <property type="evidence" value="ECO:0000315"/>
    <property type="project" value="UniProtKB"/>
</dbReference>
<dbReference type="GO" id="GO:0032715">
    <property type="term" value="P:negative regulation of interleukin-6 production"/>
    <property type="evidence" value="ECO:0000315"/>
    <property type="project" value="UniProtKB"/>
</dbReference>
<dbReference type="GO" id="GO:0032720">
    <property type="term" value="P:negative regulation of tumor necrosis factor production"/>
    <property type="evidence" value="ECO:0000315"/>
    <property type="project" value="UniProtKB"/>
</dbReference>
<dbReference type="GO" id="GO:0001866">
    <property type="term" value="P:NK T cell proliferation"/>
    <property type="evidence" value="ECO:0000314"/>
    <property type="project" value="UniProtKB"/>
</dbReference>
<dbReference type="GO" id="GO:0045893">
    <property type="term" value="P:positive regulation of DNA-templated transcription"/>
    <property type="evidence" value="ECO:0000314"/>
    <property type="project" value="UniProtKB"/>
</dbReference>
<dbReference type="GO" id="GO:0045944">
    <property type="term" value="P:positive regulation of transcription by RNA polymerase II"/>
    <property type="evidence" value="ECO:0000314"/>
    <property type="project" value="UniProtKB"/>
</dbReference>
<dbReference type="FunFam" id="1.10.10.10:FF:000066">
    <property type="entry name" value="ETS-related transcription factor Elf-2 isoform X1"/>
    <property type="match status" value="1"/>
</dbReference>
<dbReference type="Gene3D" id="1.10.10.10">
    <property type="entry name" value="Winged helix-like DNA-binding domain superfamily/Winged helix DNA-binding domain"/>
    <property type="match status" value="1"/>
</dbReference>
<dbReference type="InterPro" id="IPR000418">
    <property type="entry name" value="Ets_dom"/>
</dbReference>
<dbReference type="InterPro" id="IPR046328">
    <property type="entry name" value="ETS_fam"/>
</dbReference>
<dbReference type="InterPro" id="IPR022084">
    <property type="entry name" value="TF_Elf_N"/>
</dbReference>
<dbReference type="InterPro" id="IPR036388">
    <property type="entry name" value="WH-like_DNA-bd_sf"/>
</dbReference>
<dbReference type="InterPro" id="IPR036390">
    <property type="entry name" value="WH_DNA-bd_sf"/>
</dbReference>
<dbReference type="PANTHER" id="PTHR11849">
    <property type="entry name" value="ETS"/>
    <property type="match status" value="1"/>
</dbReference>
<dbReference type="PANTHER" id="PTHR11849:SF170">
    <property type="entry name" value="ETS-RELATED TRANSCRIPTION FACTOR ELF-4"/>
    <property type="match status" value="1"/>
</dbReference>
<dbReference type="Pfam" id="PF12310">
    <property type="entry name" value="Elf-1_N"/>
    <property type="match status" value="1"/>
</dbReference>
<dbReference type="Pfam" id="PF00178">
    <property type="entry name" value="Ets"/>
    <property type="match status" value="1"/>
</dbReference>
<dbReference type="PRINTS" id="PR00454">
    <property type="entry name" value="ETSDOMAIN"/>
</dbReference>
<dbReference type="SMART" id="SM00413">
    <property type="entry name" value="ETS"/>
    <property type="match status" value="1"/>
</dbReference>
<dbReference type="SUPFAM" id="SSF46785">
    <property type="entry name" value="Winged helix' DNA-binding domain"/>
    <property type="match status" value="1"/>
</dbReference>
<dbReference type="PROSITE" id="PS00018">
    <property type="entry name" value="EF_HAND_1"/>
    <property type="match status" value="1"/>
</dbReference>
<dbReference type="PROSITE" id="PS00345">
    <property type="entry name" value="ETS_DOMAIN_1"/>
    <property type="match status" value="1"/>
</dbReference>
<dbReference type="PROSITE" id="PS00346">
    <property type="entry name" value="ETS_DOMAIN_2"/>
    <property type="match status" value="1"/>
</dbReference>
<dbReference type="PROSITE" id="PS50061">
    <property type="entry name" value="ETS_DOMAIN_3"/>
    <property type="match status" value="1"/>
</dbReference>
<keyword id="KW-0010">Activator</keyword>
<keyword id="KW-0238">DNA-binding</keyword>
<keyword id="KW-0539">Nucleus</keyword>
<keyword id="KW-0597">Phosphoprotein</keyword>
<keyword id="KW-1185">Reference proteome</keyword>
<keyword id="KW-0804">Transcription</keyword>
<keyword id="KW-0805">Transcription regulation</keyword>
<accession>Q9Z2U4</accession>
<accession>B1AY67</accession>
<organism>
    <name type="scientific">Mus musculus</name>
    <name type="common">Mouse</name>
    <dbReference type="NCBI Taxonomy" id="10090"/>
    <lineage>
        <taxon>Eukaryota</taxon>
        <taxon>Metazoa</taxon>
        <taxon>Chordata</taxon>
        <taxon>Craniata</taxon>
        <taxon>Vertebrata</taxon>
        <taxon>Euteleostomi</taxon>
        <taxon>Mammalia</taxon>
        <taxon>Eutheria</taxon>
        <taxon>Euarchontoglires</taxon>
        <taxon>Glires</taxon>
        <taxon>Rodentia</taxon>
        <taxon>Myomorpha</taxon>
        <taxon>Muroidea</taxon>
        <taxon>Muridae</taxon>
        <taxon>Murinae</taxon>
        <taxon>Mus</taxon>
        <taxon>Mus</taxon>
    </lineage>
</organism>
<name>ELF4_MOUSE</name>
<sequence length="655" mass="70800">MAIALQPSDLVFEFASNGMDDIHQLEDPSVFPAVIVEQVPYPELVHLCSGLDLDEVHNGIIRDRTLCMTQDQILEGSILLTDDDVSTSNNVSSTEVLFNVATPSDVLDEKQIFSSPEVLSDSNSVQAINLPNFLLSTPEPDDLKKTSDAGDQKEHSEEEKVSREENLRKMGKARKRNRKTKNNRSTSPVTDPSMPIRKKSKDGKGSTIYLWEFLLALLQDRNTCPKYIKWTQREKGIFKLVDSKAVSKLWGKQKNKPDMNYETMGRALRYYYQRGILAKVEGQRLVYQFKEMPKDLVVIDDEEESPETPEDSSQASTSSTPSTSTIRRASSRVGTRASPEDKDNPPWEKPKVQHTGLQPSASLELGLSVDEEVPTTSTMLASPLQSQARLTKTVSSSPAPSNIHLGVAPVGPGSTVTLQTIPLTTVLTNGPPASTTAPTQLVLQSVPQVSTFKDTFTLQTSFPLNTNLQENQVATQGAPLILSGLPQLLAGANPQSNPAPSQVIGAGSAGPSSQPPGTVIAAFIRTSSGTSVPVVKEGPLRSSSYVQGVVTGAPVEGLLVPEETLRELLRDQGHLQPLPSQVLSRGSHNLSLVGNQTLSPPSHPTVGLTPVAELELSSGSGPLFVTEPSVTRSPTQAPFSPFNPTSLIKMEPQDI</sequence>
<feature type="chain" id="PRO_0000204090" description="ETS-related transcription factor Elf-4">
    <location>
        <begin position="1"/>
        <end position="655"/>
    </location>
</feature>
<feature type="DNA-binding region" description="ETS" evidence="4">
    <location>
        <begin position="208"/>
        <end position="290"/>
    </location>
</feature>
<feature type="region of interest" description="RUNX1-binding" evidence="2">
    <location>
        <begin position="86"/>
        <end position="205"/>
    </location>
</feature>
<feature type="region of interest" description="Disordered" evidence="5">
    <location>
        <begin position="136"/>
        <end position="202"/>
    </location>
</feature>
<feature type="region of interest" description="Disordered" evidence="5">
    <location>
        <begin position="301"/>
        <end position="362"/>
    </location>
</feature>
<feature type="region of interest" description="Disordered" evidence="5">
    <location>
        <begin position="493"/>
        <end position="512"/>
    </location>
</feature>
<feature type="compositionally biased region" description="Basic and acidic residues" evidence="5">
    <location>
        <begin position="141"/>
        <end position="168"/>
    </location>
</feature>
<feature type="compositionally biased region" description="Basic residues" evidence="5">
    <location>
        <begin position="169"/>
        <end position="182"/>
    </location>
</feature>
<feature type="compositionally biased region" description="Acidic residues" evidence="5">
    <location>
        <begin position="301"/>
        <end position="310"/>
    </location>
</feature>
<feature type="compositionally biased region" description="Low complexity" evidence="5">
    <location>
        <begin position="311"/>
        <end position="332"/>
    </location>
</feature>
<feature type="compositionally biased region" description="Basic and acidic residues" evidence="5">
    <location>
        <begin position="338"/>
        <end position="351"/>
    </location>
</feature>
<feature type="modified residue" description="Phosphoserine" evidence="2">
    <location>
        <position position="187"/>
    </location>
</feature>
<feature type="modified residue" description="Phosphoserine" evidence="2">
    <location>
        <position position="633"/>
    </location>
</feature>
<feature type="modified residue" description="Phosphoserine" evidence="2">
    <location>
        <position position="640"/>
    </location>
</feature>
<feature type="mutagenesis site" description="Higher TNFA, IL1B and IL6 expression in bone marrow-derived and peritoneal macrophages from mutant mice compared to wild-type, after VSV infection. Decreased viral clearance in mutant mice compared to wild-type. Loss of transcriptional activity shown in IFNB1 promoter-driven luciferase assay." evidence="10">
    <original>W</original>
    <variation>R</variation>
    <location>
        <position position="230"/>
    </location>
</feature>
<feature type="mutagenesis site" description="Higher IL17A, IL1B, IL6, CXCL1 and TREM1 expression in bone marrow-derived macrophages from mutant mice compared to wild-type, after LPS stimulation. CD8+ T cells from mutant mice have reduced PRF1 expression when activated with IL-2 compared to cells from wild-type littermates." evidence="9">
    <original>W</original>
    <variation>S</variation>
    <location>
        <position position="250"/>
    </location>
</feature>
<feature type="sequence conflict" description="In Ref. 1; AAD01601." evidence="11" ref="1">
    <original>N</original>
    <variation>K</variation>
    <location>
        <position position="132"/>
    </location>
</feature>
<feature type="sequence conflict" description="In Ref. 1; AAD01601." evidence="11" ref="1">
    <original>T</original>
    <variation>A</variation>
    <location>
        <position position="146"/>
    </location>
</feature>
<feature type="sequence conflict" description="In Ref. 1; AAD01601." evidence="11" ref="1">
    <original>N</original>
    <variation>S</variation>
    <location>
        <position position="344"/>
    </location>
</feature>
<feature type="sequence conflict" description="In Ref. 1; AAD01601." evidence="11" ref="1">
    <original>Q</original>
    <variation>A</variation>
    <location>
        <position position="448"/>
    </location>
</feature>
<feature type="sequence conflict" description="In Ref. 1; AAD01601." evidence="11" ref="1">
    <original>S</original>
    <variation>T</variation>
    <location>
        <position position="496"/>
    </location>
</feature>
<comment type="function">
    <text evidence="1 6 7 8 9 10">Transcriptional activator that binds to DNA sequences containing the consensus 5'-WGGA-3'. Transactivates promoters of the hematopoietic growth factor genes CSF2, IL3, IL8, and of LYZ. Acts synergistically with RUNX1 to transactivate the IL3 promoter (By similarity). Transactivates the PRF1 promoter in natural killer (NK) cells and in CD8+ T cells (PubMed:34326534). Plays a role in the development and function of NK and NK T-cells and in innate immunity. Controls the proliferation and homing of CD8+ T-cells via the Kruppel-like factors KLF4 and KLF2. Controls cell senescence in a p53-dependent manner. Can also promote cellular transformation through inhibition of the p16 pathway. Is a transcriptional regulator of inflammation, controlling T-helper 17 (Th17) cells and macrophage inflammatory responses. Required for sustained transcription of anti-inflammatory genes, including IL1RN (PubMed:34326534, PubMed:35266071). Is a negative regulator of pro-inflammatory cytokines expression, including IL17A, IL1B, IL6, TNFA and CXCL1 (PubMed:34326534, PubMed:35266071). Down-regulates expression of TREM1, a cell surface receptor involved in the amplification of inflammatory responses (PubMed:34326534, PubMed:35266071).</text>
</comment>
<comment type="subunit">
    <text evidence="1">Interacts with RUNX1 (via the Runt domain); the interaction transactivates the IL3 promoter. Interacts (via its C-terminus) with PML; the interaction translocates ELF4 to PML nuclear bodies and enhances transactivation of LYZ (By similarity).</text>
</comment>
<comment type="subcellular location">
    <subcellularLocation>
        <location evidence="1">Nucleus</location>
        <location evidence="1">PML body</location>
    </subcellularLocation>
    <text evidence="1">Accumulation into PML nuclear bodies is mediated by PML.</text>
</comment>
<comment type="similarity">
    <text evidence="3">Belongs to the ETS family.</text>
</comment>
<protein>
    <recommendedName>
        <fullName>ETS-related transcription factor Elf-4</fullName>
    </recommendedName>
    <alternativeName>
        <fullName>E74-like factor 4</fullName>
    </alternativeName>
    <alternativeName>
        <fullName>Myeloid Elf-1-like factor</fullName>
    </alternativeName>
</protein>
<evidence type="ECO:0000250" key="1"/>
<evidence type="ECO:0000250" key="2">
    <source>
        <dbReference type="UniProtKB" id="Q99607"/>
    </source>
</evidence>
<evidence type="ECO:0000255" key="3"/>
<evidence type="ECO:0000255" key="4">
    <source>
        <dbReference type="PROSITE-ProRule" id="PRU00237"/>
    </source>
</evidence>
<evidence type="ECO:0000256" key="5">
    <source>
        <dbReference type="SAM" id="MobiDB-lite"/>
    </source>
</evidence>
<evidence type="ECO:0000269" key="6">
    <source>
    </source>
</evidence>
<evidence type="ECO:0000269" key="7">
    <source>
    </source>
</evidence>
<evidence type="ECO:0000269" key="8">
    <source>
    </source>
</evidence>
<evidence type="ECO:0000269" key="9">
    <source>
    </source>
</evidence>
<evidence type="ECO:0000269" key="10">
    <source>
    </source>
</evidence>
<evidence type="ECO:0000305" key="11"/>
<evidence type="ECO:0000312" key="12">
    <source>
        <dbReference type="EMBL" id="AAD01601.1"/>
    </source>
</evidence>
<evidence type="ECO:0000312" key="13">
    <source>
        <dbReference type="MGI" id="MGI:1928377"/>
    </source>
</evidence>
<reference evidence="12" key="1">
    <citation type="submission" date="1997-07" db="EMBL/GenBank/DDBJ databases">
        <title>Murine MEF (myeloid elf-1-like factor) cDNA clone.</title>
        <authorList>
            <person name="Miyazaki Y."/>
            <person name="De Blasio T."/>
            <person name="Nimer S.D."/>
        </authorList>
    </citation>
    <scope>NUCLEOTIDE SEQUENCE [MRNA]</scope>
</reference>
<reference key="2">
    <citation type="journal article" date="2009" name="PLoS Biol.">
        <title>Lineage-specific biology revealed by a finished genome assembly of the mouse.</title>
        <authorList>
            <person name="Church D.M."/>
            <person name="Goodstadt L."/>
            <person name="Hillier L.W."/>
            <person name="Zody M.C."/>
            <person name="Goldstein S."/>
            <person name="She X."/>
            <person name="Bult C.J."/>
            <person name="Agarwala R."/>
            <person name="Cherry J.L."/>
            <person name="DiCuccio M."/>
            <person name="Hlavina W."/>
            <person name="Kapustin Y."/>
            <person name="Meric P."/>
            <person name="Maglott D."/>
            <person name="Birtle Z."/>
            <person name="Marques A.C."/>
            <person name="Graves T."/>
            <person name="Zhou S."/>
            <person name="Teague B."/>
            <person name="Potamousis K."/>
            <person name="Churas C."/>
            <person name="Place M."/>
            <person name="Herschleb J."/>
            <person name="Runnheim R."/>
            <person name="Forrest D."/>
            <person name="Amos-Landgraf J."/>
            <person name="Schwartz D.C."/>
            <person name="Cheng Z."/>
            <person name="Lindblad-Toh K."/>
            <person name="Eichler E.E."/>
            <person name="Ponting C.P."/>
        </authorList>
    </citation>
    <scope>NUCLEOTIDE SEQUENCE [LARGE SCALE GENOMIC DNA]</scope>
    <source>
        <strain>C57BL/6J</strain>
    </source>
</reference>
<reference evidence="11" key="3">
    <citation type="journal article" date="2002" name="Immunity">
        <title>The ETS protein MEF plays a critical role in perforin gene expression and the development of natural killer and NK-T cells.</title>
        <authorList>
            <person name="Lacorazza H.D."/>
            <person name="Miyazaki Y."/>
            <person name="Di Cristofano A."/>
            <person name="Deblasio A."/>
            <person name="Hedvat C."/>
            <person name="Zhang J."/>
            <person name="Cordon-Cardo C."/>
            <person name="Mao S."/>
            <person name="Pandolfi P.P."/>
            <person name="Nimer S.D."/>
        </authorList>
    </citation>
    <scope>FUNCTION</scope>
</reference>
<reference key="4">
    <citation type="journal article" date="2009" name="Mol. Cell. Biol.">
        <title>ELF4/MEF activates MDM2 expression and blocks oncogene-induced p16 activation to promote transformation.</title>
        <authorList>
            <person name="Sashida G."/>
            <person name="Liu Y."/>
            <person name="Elf S."/>
            <person name="Miyata Y."/>
            <person name="Ohyashiki K."/>
            <person name="Izumi M."/>
            <person name="Menendez S."/>
            <person name="Nimer S.D."/>
        </authorList>
    </citation>
    <scope>FUNCTION</scope>
</reference>
<reference key="5">
    <citation type="journal article" date="2009" name="Nat. Immunol.">
        <title>Transcription factor ELF4 controls the proliferation and homing of CD8+ T cells via the Kruppel-like factors KLF4 and KLF2.</title>
        <authorList>
            <person name="Yamada T."/>
            <person name="Park C.S."/>
            <person name="Mamonkin M."/>
            <person name="Lacorazza H.D."/>
        </authorList>
    </citation>
    <scope>FUNCTION</scope>
</reference>
<reference key="6">
    <citation type="journal article" date="2010" name="Cell">
        <title>A tissue-specific atlas of mouse protein phosphorylation and expression.</title>
        <authorList>
            <person name="Huttlin E.L."/>
            <person name="Jedrychowski M.P."/>
            <person name="Elias J.E."/>
            <person name="Goswami T."/>
            <person name="Rad R."/>
            <person name="Beausoleil S.A."/>
            <person name="Villen J."/>
            <person name="Haas W."/>
            <person name="Sowa M.E."/>
            <person name="Gygi S.P."/>
        </authorList>
    </citation>
    <scope>IDENTIFICATION BY MASS SPECTROMETRY [LARGE SCALE ANALYSIS]</scope>
    <source>
        <tissue>Lung</tissue>
        <tissue>Spleen</tissue>
    </source>
</reference>
<reference key="7">
    <citation type="journal article" date="2021" name="Nat. Immunol.">
        <title>Human autoinflammatory disease reveals ELF4 as a transcriptional regulator of inflammation.</title>
        <authorList>
            <person name="Tyler P.M."/>
            <person name="Bucklin M.L."/>
            <person name="Zhao M."/>
            <person name="Maher T.J."/>
            <person name="Rice A.J."/>
            <person name="Ji W."/>
            <person name="Warner N."/>
            <person name="Pan J."/>
            <person name="Morotti R."/>
            <person name="McCarthy P."/>
            <person name="Griffiths A."/>
            <person name="van Rossum A.M.C."/>
            <person name="Hollink I.H.I.M."/>
            <person name="Dalm V.A.S.H."/>
            <person name="Catanzaro J."/>
            <person name="Lakhani S.A."/>
            <person name="Muise A.M."/>
            <person name="Lucas C.L."/>
        </authorList>
    </citation>
    <scope>FUNCTION</scope>
    <scope>MUTAGENESIS OF TRP-250</scope>
</reference>
<reference key="8">
    <citation type="journal article" date="2022" name="J. Clin. Immunol.">
        <title>Loss of Function Mutation in ELF4 Causes Autoinflammatory and Immunodeficiency Disease in Human.</title>
        <authorList>
            <person name="Sun G."/>
            <person name="Qiu L."/>
            <person name="Yu L."/>
            <person name="An Y."/>
            <person name="Ding Y."/>
            <person name="Zhou L."/>
            <person name="Wu J."/>
            <person name="Yang X."/>
            <person name="Zhang Z."/>
            <person name="Tang X."/>
            <person name="Xia H."/>
            <person name="Cao L."/>
            <person name="You F."/>
            <person name="Zhao X."/>
            <person name="Du H."/>
        </authorList>
    </citation>
    <scope>FUNCTION</scope>
    <scope>MUTAGENESIS OF TRP-230</scope>
</reference>